<reference key="1">
    <citation type="journal article" date="2000" name="DNA Res.">
        <title>Structural analysis of Arabidopsis thaliana chromosome 5. X. Sequence features of the regions of 3,076,755 bp covered by sixty P1 and TAC clones.</title>
        <authorList>
            <person name="Sato S."/>
            <person name="Nakamura Y."/>
            <person name="Kaneko T."/>
            <person name="Katoh T."/>
            <person name="Asamizu E."/>
            <person name="Kotani H."/>
            <person name="Tabata S."/>
        </authorList>
    </citation>
    <scope>NUCLEOTIDE SEQUENCE [LARGE SCALE GENOMIC DNA]</scope>
    <source>
        <strain>cv. Columbia</strain>
    </source>
</reference>
<reference key="2">
    <citation type="journal article" date="2017" name="Plant J.">
        <title>Araport11: a complete reannotation of the Arabidopsis thaliana reference genome.</title>
        <authorList>
            <person name="Cheng C.Y."/>
            <person name="Krishnakumar V."/>
            <person name="Chan A.P."/>
            <person name="Thibaud-Nissen F."/>
            <person name="Schobel S."/>
            <person name="Town C.D."/>
        </authorList>
    </citation>
    <scope>GENOME REANNOTATION</scope>
    <source>
        <strain>cv. Columbia</strain>
    </source>
</reference>
<reference key="3">
    <citation type="submission" date="2006-07" db="EMBL/GenBank/DDBJ databases">
        <title>Large-scale analysis of RIKEN Arabidopsis full-length (RAFL) cDNAs.</title>
        <authorList>
            <person name="Totoki Y."/>
            <person name="Seki M."/>
            <person name="Ishida J."/>
            <person name="Nakajima M."/>
            <person name="Enju A."/>
            <person name="Kamiya A."/>
            <person name="Narusaka M."/>
            <person name="Shin-i T."/>
            <person name="Nakagawa M."/>
            <person name="Sakamoto N."/>
            <person name="Oishi K."/>
            <person name="Kohara Y."/>
            <person name="Kobayashi M."/>
            <person name="Toyoda A."/>
            <person name="Sakaki Y."/>
            <person name="Sakurai T."/>
            <person name="Iida K."/>
            <person name="Akiyama K."/>
            <person name="Satou M."/>
            <person name="Toyoda T."/>
            <person name="Konagaya A."/>
            <person name="Carninci P."/>
            <person name="Kawai J."/>
            <person name="Hayashizaki Y."/>
            <person name="Shinozaki K."/>
        </authorList>
    </citation>
    <scope>NUCLEOTIDE SEQUENCE [LARGE SCALE MRNA]</scope>
    <source>
        <strain>cv. Columbia</strain>
    </source>
</reference>
<reference key="4">
    <citation type="submission" date="2006-12" db="EMBL/GenBank/DDBJ databases">
        <title>Arabidopsis ORF clones.</title>
        <authorList>
            <person name="Bautista V.R."/>
            <person name="Kim C.J."/>
            <person name="Chen H."/>
            <person name="Wu S.Y."/>
            <person name="De Los Reyes C."/>
            <person name="Ecker J.R."/>
        </authorList>
    </citation>
    <scope>NUCLEOTIDE SEQUENCE [LARGE SCALE MRNA]</scope>
</reference>
<reference key="5">
    <citation type="journal article" date="2007" name="Plant J.">
        <title>Arabidopsis ESK1 encodes a novel regulator of freezing tolerance.</title>
        <authorList>
            <person name="Xin Z."/>
            <person name="Mandaokar A."/>
            <person name="Chen J."/>
            <person name="Last R.L."/>
            <person name="Browse J."/>
        </authorList>
    </citation>
    <scope>GENE FAMILY</scope>
    <source>
        <strain>cv. Columbia</strain>
    </source>
</reference>
<reference key="6">
    <citation type="journal article" date="2010" name="Plant Physiol.">
        <title>TRICHOME BIREFRINGENCE and its homolog AT5G01360 encode plant-specific DUF231 proteins required for cellulose biosynthesis in Arabidopsis.</title>
        <authorList>
            <person name="Bischoff V."/>
            <person name="Nita S."/>
            <person name="Neumetzler L."/>
            <person name="Schindelasch D."/>
            <person name="Urbain A."/>
            <person name="Eshed R."/>
            <person name="Persson S."/>
            <person name="Delmer D."/>
            <person name="Scheible W.R."/>
        </authorList>
    </citation>
    <scope>GENE FAMILY</scope>
    <scope>NOMENCLATURE</scope>
</reference>
<reference key="7">
    <citation type="journal article" date="2010" name="Plant Signal. Behav.">
        <title>Involvement of TBL/DUF231 proteins into cell wall biology.</title>
        <authorList>
            <person name="Bischoff V."/>
            <person name="Selbig J."/>
            <person name="Scheible W.R."/>
        </authorList>
    </citation>
    <scope>3D-STRUCTURE MODELING</scope>
</reference>
<feature type="chain" id="PRO_0000425380" description="Protein trichome birefringence-like 14">
    <location>
        <begin position="1"/>
        <end position="408"/>
    </location>
</feature>
<feature type="transmembrane region" description="Helical; Signal-anchor for type II membrane protein" evidence="3">
    <location>
        <begin position="11"/>
        <end position="31"/>
    </location>
</feature>
<feature type="short sequence motif" description="GDS motif">
    <location>
        <begin position="131"/>
        <end position="133"/>
    </location>
</feature>
<feature type="short sequence motif" description="DCXHWCLPGXXDXWN motif">
    <location>
        <begin position="387"/>
        <end position="401"/>
    </location>
</feature>
<comment type="function">
    <text evidence="1 2">May act as a bridging protein that binds pectin and other cell wall polysaccharides. Probably involved in maintaining esterification of pectins (By similarity). May be involved in the specific O-acetylation of cell wall polymers (By similarity).</text>
</comment>
<comment type="subcellular location">
    <subcellularLocation>
        <location evidence="4">Membrane</location>
        <topology evidence="4">Single-pass type II membrane protein</topology>
    </subcellularLocation>
</comment>
<comment type="miscellaneous">
    <text evidence="5">Contains 2 motifs that are conserved in esterases, but it is unlikely that this protein belongs to the catalytically active pectin esterases.</text>
</comment>
<comment type="similarity">
    <text evidence="4">Belongs to the PC-esterase family. TBL subfamily.</text>
</comment>
<comment type="sequence caution" evidence="4">
    <conflict type="erroneous gene model prediction">
        <sequence resource="EMBL-CDS" id="BAA96905"/>
    </conflict>
</comment>
<proteinExistence type="evidence at transcript level"/>
<sequence>MFGGKSHILRGSVSLALIVLILLVIILLVSEENPLRDSLFEVKRQFSSSSSSSSSVCNFAKGKWVEDRKRPLYSGFECKQWLSSMWSCRIMGRPDFSFEGYRWQPEGCNMPQFDRFTFLTRMQNKTIAFIGDSLGRQQFQSLMCMASGGEDSPEVQNVGWEYGLVKAKGALRPDGWAYRFPTTNTTILYYWSASLSDLVPMNNTDPPSLTAMHLDRPPAFMRNYLHRFDVLVLNTGHHWNRGKIEGNHWVMHVNGTQVEGEYLKDIRNAKDFTIHSVAKWLDAQLPLHPRLKAFFRTISPRHFKNGDWNTGGNCNNTVPLSRGSEITGDDGSIDATVESAVNGTRIKILDITALSELRDEAHISGSKLKPRKPKKASNVTSTPTINDCLHWCLPGIPDTWNELFIAQI</sequence>
<gene>
    <name type="primary">TBL14</name>
    <name type="ordered locus">At5g64020</name>
    <name type="ORF">MBM17.12</name>
</gene>
<dbReference type="EMBL" id="AB019227">
    <property type="protein sequence ID" value="BAA96905.1"/>
    <property type="status" value="ALT_SEQ"/>
    <property type="molecule type" value="Genomic_DNA"/>
</dbReference>
<dbReference type="EMBL" id="CP002688">
    <property type="protein sequence ID" value="AED97830.1"/>
    <property type="molecule type" value="Genomic_DNA"/>
</dbReference>
<dbReference type="EMBL" id="AK228991">
    <property type="protein sequence ID" value="BAF00879.1"/>
    <property type="molecule type" value="mRNA"/>
</dbReference>
<dbReference type="EMBL" id="BT029767">
    <property type="protein sequence ID" value="ABM06037.1"/>
    <property type="molecule type" value="mRNA"/>
</dbReference>
<dbReference type="RefSeq" id="NP_201207.2">
    <property type="nucleotide sequence ID" value="NM_125798.4"/>
</dbReference>
<dbReference type="SMR" id="Q0WPS0"/>
<dbReference type="FunCoup" id="Q0WPS0">
    <property type="interactions" value="284"/>
</dbReference>
<dbReference type="STRING" id="3702.Q0WPS0"/>
<dbReference type="PaxDb" id="3702-AT5G64020.1"/>
<dbReference type="ProteomicsDB" id="234265"/>
<dbReference type="EnsemblPlants" id="AT5G64020.1">
    <property type="protein sequence ID" value="AT5G64020.1"/>
    <property type="gene ID" value="AT5G64020"/>
</dbReference>
<dbReference type="GeneID" id="836523"/>
<dbReference type="Gramene" id="AT5G64020.1">
    <property type="protein sequence ID" value="AT5G64020.1"/>
    <property type="gene ID" value="AT5G64020"/>
</dbReference>
<dbReference type="KEGG" id="ath:AT5G64020"/>
<dbReference type="Araport" id="AT5G64020"/>
<dbReference type="TAIR" id="AT5G64020">
    <property type="gene designation" value="TBL14"/>
</dbReference>
<dbReference type="eggNOG" id="ENOG502QRJ5">
    <property type="taxonomic scope" value="Eukaryota"/>
</dbReference>
<dbReference type="HOGENOM" id="CLU_020953_0_2_1"/>
<dbReference type="InParanoid" id="Q0WPS0"/>
<dbReference type="OMA" id="NENCNYA"/>
<dbReference type="PhylomeDB" id="Q0WPS0"/>
<dbReference type="PRO" id="PR:Q0WPS0"/>
<dbReference type="Proteomes" id="UP000006548">
    <property type="component" value="Chromosome 5"/>
</dbReference>
<dbReference type="ExpressionAtlas" id="Q0WPS0">
    <property type="expression patterns" value="baseline and differential"/>
</dbReference>
<dbReference type="GO" id="GO:0005794">
    <property type="term" value="C:Golgi apparatus"/>
    <property type="evidence" value="ECO:0007669"/>
    <property type="project" value="UniProtKB-ARBA"/>
</dbReference>
<dbReference type="GO" id="GO:0016020">
    <property type="term" value="C:membrane"/>
    <property type="evidence" value="ECO:0007669"/>
    <property type="project" value="UniProtKB-SubCell"/>
</dbReference>
<dbReference type="GO" id="GO:0016740">
    <property type="term" value="F:transferase activity"/>
    <property type="evidence" value="ECO:0007669"/>
    <property type="project" value="InterPro"/>
</dbReference>
<dbReference type="GO" id="GO:0045492">
    <property type="term" value="P:xylan biosynthetic process"/>
    <property type="evidence" value="ECO:0007669"/>
    <property type="project" value="UniProtKB-ARBA"/>
</dbReference>
<dbReference type="InterPro" id="IPR026057">
    <property type="entry name" value="TBL_C"/>
</dbReference>
<dbReference type="InterPro" id="IPR025846">
    <property type="entry name" value="TBL_N"/>
</dbReference>
<dbReference type="PANTHER" id="PTHR13533">
    <property type="entry name" value="N-ACETYLNEURAMINATE 9-O-ACETYLTRANSFERASE"/>
    <property type="match status" value="1"/>
</dbReference>
<dbReference type="PANTHER" id="PTHR13533:SF16">
    <property type="entry name" value="PROTEIN TRICHOME BIREFRINGENCE-LIKE 14-RELATED"/>
    <property type="match status" value="1"/>
</dbReference>
<dbReference type="Pfam" id="PF13839">
    <property type="entry name" value="PC-Esterase"/>
    <property type="match status" value="1"/>
</dbReference>
<dbReference type="Pfam" id="PF14416">
    <property type="entry name" value="PMR5N"/>
    <property type="match status" value="1"/>
</dbReference>
<protein>
    <recommendedName>
        <fullName>Protein trichome birefringence-like 14</fullName>
    </recommendedName>
</protein>
<keyword id="KW-0472">Membrane</keyword>
<keyword id="KW-1185">Reference proteome</keyword>
<keyword id="KW-0735">Signal-anchor</keyword>
<keyword id="KW-0812">Transmembrane</keyword>
<keyword id="KW-1133">Transmembrane helix</keyword>
<accession>Q0WPS0</accession>
<accession>Q9LVN3</accession>
<name>TBL14_ARATH</name>
<organism>
    <name type="scientific">Arabidopsis thaliana</name>
    <name type="common">Mouse-ear cress</name>
    <dbReference type="NCBI Taxonomy" id="3702"/>
    <lineage>
        <taxon>Eukaryota</taxon>
        <taxon>Viridiplantae</taxon>
        <taxon>Streptophyta</taxon>
        <taxon>Embryophyta</taxon>
        <taxon>Tracheophyta</taxon>
        <taxon>Spermatophyta</taxon>
        <taxon>Magnoliopsida</taxon>
        <taxon>eudicotyledons</taxon>
        <taxon>Gunneridae</taxon>
        <taxon>Pentapetalae</taxon>
        <taxon>rosids</taxon>
        <taxon>malvids</taxon>
        <taxon>Brassicales</taxon>
        <taxon>Brassicaceae</taxon>
        <taxon>Camelineae</taxon>
        <taxon>Arabidopsis</taxon>
    </lineage>
</organism>
<evidence type="ECO:0000250" key="1">
    <source>
        <dbReference type="UniProtKB" id="Q9FG35"/>
    </source>
</evidence>
<evidence type="ECO:0000250" key="2">
    <source>
        <dbReference type="UniProtKB" id="Q9LY46"/>
    </source>
</evidence>
<evidence type="ECO:0000255" key="3"/>
<evidence type="ECO:0000305" key="4"/>
<evidence type="ECO:0000305" key="5">
    <source>
    </source>
</evidence>